<dbReference type="EMBL" id="CP000413">
    <property type="protein sequence ID" value="ABJ60606.1"/>
    <property type="molecule type" value="Genomic_DNA"/>
</dbReference>
<dbReference type="RefSeq" id="WP_003647073.1">
    <property type="nucleotide sequence ID" value="NZ_WBMG01000002.1"/>
</dbReference>
<dbReference type="SMR" id="Q042L6"/>
<dbReference type="KEGG" id="lga:LGAS_1237"/>
<dbReference type="HOGENOM" id="CLU_084338_1_0_9"/>
<dbReference type="BioCyc" id="LGAS324831:G1G6Y-1233-MONOMER"/>
<dbReference type="Proteomes" id="UP000000664">
    <property type="component" value="Chromosome"/>
</dbReference>
<dbReference type="GO" id="GO:0005886">
    <property type="term" value="C:plasma membrane"/>
    <property type="evidence" value="ECO:0007669"/>
    <property type="project" value="UniProtKB-SubCell"/>
</dbReference>
<dbReference type="GO" id="GO:0045259">
    <property type="term" value="C:proton-transporting ATP synthase complex"/>
    <property type="evidence" value="ECO:0007669"/>
    <property type="project" value="UniProtKB-KW"/>
</dbReference>
<dbReference type="GO" id="GO:0005524">
    <property type="term" value="F:ATP binding"/>
    <property type="evidence" value="ECO:0007669"/>
    <property type="project" value="UniProtKB-UniRule"/>
</dbReference>
<dbReference type="GO" id="GO:0046933">
    <property type="term" value="F:proton-transporting ATP synthase activity, rotational mechanism"/>
    <property type="evidence" value="ECO:0007669"/>
    <property type="project" value="UniProtKB-UniRule"/>
</dbReference>
<dbReference type="CDD" id="cd12152">
    <property type="entry name" value="F1-ATPase_delta"/>
    <property type="match status" value="1"/>
</dbReference>
<dbReference type="Gene3D" id="1.20.5.440">
    <property type="entry name" value="ATP synthase delta/epsilon subunit, C-terminal domain"/>
    <property type="match status" value="1"/>
</dbReference>
<dbReference type="Gene3D" id="2.60.15.10">
    <property type="entry name" value="F0F1 ATP synthase delta/epsilon subunit, N-terminal"/>
    <property type="match status" value="1"/>
</dbReference>
<dbReference type="HAMAP" id="MF_00530">
    <property type="entry name" value="ATP_synth_epsil_bac"/>
    <property type="match status" value="1"/>
</dbReference>
<dbReference type="InterPro" id="IPR036794">
    <property type="entry name" value="ATP_F1_dsu/esu_C_sf"/>
</dbReference>
<dbReference type="InterPro" id="IPR001469">
    <property type="entry name" value="ATP_synth_F1_dsu/esu"/>
</dbReference>
<dbReference type="InterPro" id="IPR020546">
    <property type="entry name" value="ATP_synth_F1_dsu/esu_N"/>
</dbReference>
<dbReference type="InterPro" id="IPR020547">
    <property type="entry name" value="ATP_synth_F1_esu_C"/>
</dbReference>
<dbReference type="InterPro" id="IPR036771">
    <property type="entry name" value="ATPsynth_dsu/esu_N"/>
</dbReference>
<dbReference type="NCBIfam" id="TIGR01216">
    <property type="entry name" value="ATP_synt_epsi"/>
    <property type="match status" value="1"/>
</dbReference>
<dbReference type="NCBIfam" id="NF001846">
    <property type="entry name" value="PRK00571.1-3"/>
    <property type="match status" value="1"/>
</dbReference>
<dbReference type="PANTHER" id="PTHR13822">
    <property type="entry name" value="ATP SYNTHASE DELTA/EPSILON CHAIN"/>
    <property type="match status" value="1"/>
</dbReference>
<dbReference type="PANTHER" id="PTHR13822:SF10">
    <property type="entry name" value="ATP SYNTHASE EPSILON CHAIN, CHLOROPLASTIC"/>
    <property type="match status" value="1"/>
</dbReference>
<dbReference type="Pfam" id="PF00401">
    <property type="entry name" value="ATP-synt_DE"/>
    <property type="match status" value="1"/>
</dbReference>
<dbReference type="Pfam" id="PF02823">
    <property type="entry name" value="ATP-synt_DE_N"/>
    <property type="match status" value="1"/>
</dbReference>
<dbReference type="SUPFAM" id="SSF46604">
    <property type="entry name" value="Epsilon subunit of F1F0-ATP synthase C-terminal domain"/>
    <property type="match status" value="1"/>
</dbReference>
<dbReference type="SUPFAM" id="SSF51344">
    <property type="entry name" value="Epsilon subunit of F1F0-ATP synthase N-terminal domain"/>
    <property type="match status" value="1"/>
</dbReference>
<reference key="1">
    <citation type="journal article" date="2006" name="Proc. Natl. Acad. Sci. U.S.A.">
        <title>Comparative genomics of the lactic acid bacteria.</title>
        <authorList>
            <person name="Makarova K.S."/>
            <person name="Slesarev A."/>
            <person name="Wolf Y.I."/>
            <person name="Sorokin A."/>
            <person name="Mirkin B."/>
            <person name="Koonin E.V."/>
            <person name="Pavlov A."/>
            <person name="Pavlova N."/>
            <person name="Karamychev V."/>
            <person name="Polouchine N."/>
            <person name="Shakhova V."/>
            <person name="Grigoriev I."/>
            <person name="Lou Y."/>
            <person name="Rohksar D."/>
            <person name="Lucas S."/>
            <person name="Huang K."/>
            <person name="Goodstein D.M."/>
            <person name="Hawkins T."/>
            <person name="Plengvidhya V."/>
            <person name="Welker D."/>
            <person name="Hughes J."/>
            <person name="Goh Y."/>
            <person name="Benson A."/>
            <person name="Baldwin K."/>
            <person name="Lee J.-H."/>
            <person name="Diaz-Muniz I."/>
            <person name="Dosti B."/>
            <person name="Smeianov V."/>
            <person name="Wechter W."/>
            <person name="Barabote R."/>
            <person name="Lorca G."/>
            <person name="Altermann E."/>
            <person name="Barrangou R."/>
            <person name="Ganesan B."/>
            <person name="Xie Y."/>
            <person name="Rawsthorne H."/>
            <person name="Tamir D."/>
            <person name="Parker C."/>
            <person name="Breidt F."/>
            <person name="Broadbent J.R."/>
            <person name="Hutkins R."/>
            <person name="O'Sullivan D."/>
            <person name="Steele J."/>
            <person name="Unlu G."/>
            <person name="Saier M.H. Jr."/>
            <person name="Klaenhammer T."/>
            <person name="Richardson P."/>
            <person name="Kozyavkin S."/>
            <person name="Weimer B.C."/>
            <person name="Mills D.A."/>
        </authorList>
    </citation>
    <scope>NUCLEOTIDE SEQUENCE [LARGE SCALE GENOMIC DNA]</scope>
    <source>
        <strain>ATCC 33323 / DSM 20243 / BCRC 14619 / CIP 102991 / JCM 1131 / KCTC 3163 / NCIMB 11718 / NCTC 13722 / AM63</strain>
    </source>
</reference>
<sequence>MADPEKILKVSVVTPDGIVYSHNATMVAMRAIDGERTIMYDHLPIVTPLAIGEVRVKRTHEMNDRVDHIAVNGGYIEFSNNEATIIADSAERARNIDVERAQSAKKRAEQHMQEAKEKHNEREMLEAEIALRRAVNRLHVRENYGK</sequence>
<organism>
    <name type="scientific">Lactobacillus gasseri (strain ATCC 33323 / DSM 20243 / BCRC 14619 / CIP 102991 / JCM 1131 / KCTC 3163 / NCIMB 11718 / NCTC 13722 / AM63)</name>
    <dbReference type="NCBI Taxonomy" id="324831"/>
    <lineage>
        <taxon>Bacteria</taxon>
        <taxon>Bacillati</taxon>
        <taxon>Bacillota</taxon>
        <taxon>Bacilli</taxon>
        <taxon>Lactobacillales</taxon>
        <taxon>Lactobacillaceae</taxon>
        <taxon>Lactobacillus</taxon>
    </lineage>
</organism>
<comment type="function">
    <text evidence="1">Produces ATP from ADP in the presence of a proton gradient across the membrane.</text>
</comment>
<comment type="subunit">
    <text evidence="1">F-type ATPases have 2 components, CF(1) - the catalytic core - and CF(0) - the membrane proton channel. CF(1) has five subunits: alpha(3), beta(3), gamma(1), delta(1), epsilon(1). CF(0) has three main subunits: a, b and c.</text>
</comment>
<comment type="subcellular location">
    <subcellularLocation>
        <location evidence="1">Cell membrane</location>
        <topology evidence="1">Peripheral membrane protein</topology>
    </subcellularLocation>
</comment>
<comment type="similarity">
    <text evidence="1">Belongs to the ATPase epsilon chain family.</text>
</comment>
<proteinExistence type="inferred from homology"/>
<protein>
    <recommendedName>
        <fullName evidence="1">ATP synthase epsilon chain</fullName>
    </recommendedName>
    <alternativeName>
        <fullName evidence="1">ATP synthase F1 sector epsilon subunit</fullName>
    </alternativeName>
    <alternativeName>
        <fullName evidence="1">F-ATPase epsilon subunit</fullName>
    </alternativeName>
</protein>
<name>ATPE_LACGA</name>
<keyword id="KW-0066">ATP synthesis</keyword>
<keyword id="KW-1003">Cell membrane</keyword>
<keyword id="KW-0139">CF(1)</keyword>
<keyword id="KW-0375">Hydrogen ion transport</keyword>
<keyword id="KW-0406">Ion transport</keyword>
<keyword id="KW-0472">Membrane</keyword>
<keyword id="KW-0813">Transport</keyword>
<gene>
    <name evidence="1" type="primary">atpC</name>
    <name type="ordered locus">LGAS_1237</name>
</gene>
<accession>Q042L6</accession>
<evidence type="ECO:0000255" key="1">
    <source>
        <dbReference type="HAMAP-Rule" id="MF_00530"/>
    </source>
</evidence>
<evidence type="ECO:0000256" key="2">
    <source>
        <dbReference type="SAM" id="MobiDB-lite"/>
    </source>
</evidence>
<feature type="chain" id="PRO_1000056496" description="ATP synthase epsilon chain">
    <location>
        <begin position="1"/>
        <end position="146"/>
    </location>
</feature>
<feature type="region of interest" description="Disordered" evidence="2">
    <location>
        <begin position="102"/>
        <end position="122"/>
    </location>
</feature>